<name>ESPG2_MYCTO</name>
<organism>
    <name type="scientific">Mycobacterium tuberculosis (strain CDC 1551 / Oshkosh)</name>
    <dbReference type="NCBI Taxonomy" id="83331"/>
    <lineage>
        <taxon>Bacteria</taxon>
        <taxon>Bacillati</taxon>
        <taxon>Actinomycetota</taxon>
        <taxon>Actinomycetes</taxon>
        <taxon>Mycobacteriales</taxon>
        <taxon>Mycobacteriaceae</taxon>
        <taxon>Mycobacterium</taxon>
        <taxon>Mycobacterium tuberculosis complex</taxon>
    </lineage>
</organism>
<feature type="chain" id="PRO_0000427852" description="ESX-2 secretion-associated protein EspG2">
    <location>
        <begin position="1"/>
        <end position="276"/>
    </location>
</feature>
<proteinExistence type="inferred from homology"/>
<dbReference type="EMBL" id="AE000516">
    <property type="protein sequence ID" value="AAK48371.1"/>
    <property type="molecule type" value="Genomic_DNA"/>
</dbReference>
<dbReference type="PIR" id="B70598">
    <property type="entry name" value="B70598"/>
</dbReference>
<dbReference type="RefSeq" id="WP_003400028.1">
    <property type="nucleotide sequence ID" value="NZ_KK341228.1"/>
</dbReference>
<dbReference type="SMR" id="P9WJC8"/>
<dbReference type="GeneID" id="45427892"/>
<dbReference type="KEGG" id="mtc:MT4004"/>
<dbReference type="PATRIC" id="fig|83331.31.peg.4311"/>
<dbReference type="HOGENOM" id="CLU_085037_0_0_11"/>
<dbReference type="Proteomes" id="UP000001020">
    <property type="component" value="Chromosome"/>
</dbReference>
<dbReference type="GO" id="GO:0005737">
    <property type="term" value="C:cytoplasm"/>
    <property type="evidence" value="ECO:0007669"/>
    <property type="project" value="UniProtKB-SubCell"/>
</dbReference>
<dbReference type="InterPro" id="IPR025734">
    <property type="entry name" value="EspG"/>
</dbReference>
<dbReference type="Pfam" id="PF14011">
    <property type="entry name" value="ESX-1_EspG"/>
    <property type="match status" value="1"/>
</dbReference>
<evidence type="ECO:0000250" key="1">
    <source>
        <dbReference type="UniProtKB" id="B2HSU5"/>
    </source>
</evidence>
<evidence type="ECO:0000250" key="2">
    <source>
        <dbReference type="UniProtKB" id="O53943"/>
    </source>
</evidence>
<evidence type="ECO:0000250" key="3">
    <source>
        <dbReference type="UniProtKB" id="P9WJC9"/>
    </source>
</evidence>
<evidence type="ECO:0000305" key="4"/>
<keyword id="KW-0143">Chaperone</keyword>
<keyword id="KW-0963">Cytoplasm</keyword>
<keyword id="KW-1185">Reference proteome</keyword>
<comment type="function">
    <text evidence="2">Specific chaperone for cognate PE/PPE proteins. Plays an important role in preventing aggregation of PE/PPE dimers.</text>
</comment>
<comment type="subunit">
    <text evidence="2">Interacts specifically with ESX-2-dependent PE/PPE proteins.</text>
</comment>
<comment type="subcellular location">
    <subcellularLocation>
        <location evidence="1">Cytoplasm</location>
    </subcellularLocation>
</comment>
<comment type="similarity">
    <text evidence="4">Belongs to the EspG family.</text>
</comment>
<protein>
    <recommendedName>
        <fullName evidence="4">ESX-2 secretion-associated protein EspG2</fullName>
    </recommendedName>
</protein>
<accession>P9WJC8</accession>
<accession>L0TDV4</accession>
<accession>O05455</accession>
<accession>Q7D4N6</accession>
<sequence length="276" mass="29596">MLTTTVDGLWVLQAVTGVEQTCPELGLRPLLPRLDTAERALRHPVAAELMAVGALDQAGNADPMVREWLTVLLRRDLGLLVTIGVPGGEPTRAAICRFATWWVVLERHGNLVRLYPAGTASDEAGAGELVVGQVERLCGVAEAAPLRPVTVDADELLHAVRDAGTLRSYLLSQRLDVDQLQMVTMAADPTRSAHATLVALQAGVGPEKSARILVGDSTVAIVDTAAGRICVESVTSGQRRYQVLSPGSRSDIGGAVQRLIRRLPAGDEWYSYRRVV</sequence>
<reference key="1">
    <citation type="journal article" date="2002" name="J. Bacteriol.">
        <title>Whole-genome comparison of Mycobacterium tuberculosis clinical and laboratory strains.</title>
        <authorList>
            <person name="Fleischmann R.D."/>
            <person name="Alland D."/>
            <person name="Eisen J.A."/>
            <person name="Carpenter L."/>
            <person name="White O."/>
            <person name="Peterson J.D."/>
            <person name="DeBoy R.T."/>
            <person name="Dodson R.J."/>
            <person name="Gwinn M.L."/>
            <person name="Haft D.H."/>
            <person name="Hickey E.K."/>
            <person name="Kolonay J.F."/>
            <person name="Nelson W.C."/>
            <person name="Umayam L.A."/>
            <person name="Ermolaeva M.D."/>
            <person name="Salzberg S.L."/>
            <person name="Delcher A."/>
            <person name="Utterback T.R."/>
            <person name="Weidman J.F."/>
            <person name="Khouri H.M."/>
            <person name="Gill J."/>
            <person name="Mikula A."/>
            <person name="Bishai W."/>
            <person name="Jacobs W.R. Jr."/>
            <person name="Venter J.C."/>
            <person name="Fraser C.M."/>
        </authorList>
    </citation>
    <scope>NUCLEOTIDE SEQUENCE [LARGE SCALE GENOMIC DNA]</scope>
    <source>
        <strain>CDC 1551 / Oshkosh</strain>
    </source>
</reference>
<gene>
    <name evidence="3" type="primary">espG2</name>
    <name type="ordered locus">MT4004</name>
</gene>